<keyword id="KW-1185">Reference proteome</keyword>
<reference key="1">
    <citation type="journal article" date="1996" name="Nucleic Acids Res.">
        <title>Complete sequence analysis of the genome of the bacterium Mycoplasma pneumoniae.</title>
        <authorList>
            <person name="Himmelreich R."/>
            <person name="Hilbert H."/>
            <person name="Plagens H."/>
            <person name="Pirkl E."/>
            <person name="Li B.-C."/>
            <person name="Herrmann R."/>
        </authorList>
    </citation>
    <scope>NUCLEOTIDE SEQUENCE [LARGE SCALE GENOMIC DNA]</scope>
    <source>
        <strain>ATCC 29342 / M129 / Subtype 1</strain>
    </source>
</reference>
<sequence>MEFLEQEGQEVLTKEIKAGFCEITPSSITEQTTKPQLDETQLVDEYVHTKELETTPIPISFATKEVLFEEVFNTPSTQQVDESVLVNEYIELTQQIKNASEQVSSNHTHKFSVATEPAATKAVSETMLLDDYVEMVEQDVQAQTALPQAALDPTVSLTFSSPIDSNAILVYPEMKVPHVFDTVAPTTTTVPLDQTQLLDELVEVPVLTHTVTPAPLQPKAAPTNFALDQTQLVDELVTVPLTHTLVNESAPVTPVVVTSPAAEHSFSITTVDKANLTNALSQTVVIKPAEDSAHQSAVLDKEIATKQAQLQQLQAQIELRQAQLETPPVTYMGVEEYKLLPVQDVVPVQPTVSFEMTLLQEQLDKALKHNAALQIQLEEQLAKPLQYDQSPVLQERIELLQNQNTNLTQELNELQQKLFKSQNNSLLLARLEEENRTLKQHLQNNLPEANQLNFVLEKQLEQLQQDKHSLTLQIEQYKFDSKKHQEQLALIPSLRSEINSLETEVISLKQTNQRLSLIERENNFLKTEIKQLRETKLNDENTKYRNLLKQYELMRADSDAKLKELEHEQHLAHQHHQEQLAQLQRHNEALVKELDQVKATNFELGLAAQGFEQQKVVLEQKNSSLLASLQAAEENVQALGITNSELQNQLNVLEFTHKEKTAFDSKTLTLTKQQLEQTQFDLSLTQEQLATFKQQNQSLTDKLMASETQLNHLQQSDENLTQLQTQHELLQESYNKLQDEANHTQQQFHQAQNELDAAHQQLALFKQNNEELTDKCSNIQNELHDLNRVKTNWENLNTEHNLLQDKYAQQKEQMQHEHSNLAQIQAEHELLQESYNKVKAELNEIQITNLNEANAQYQDLLSAYELLQSNHNKLKQELQVLNQVNLEKQQLAQKLHNTHQSLSQTHAELTQLQAAYNNLQATPPVSDELLEQFNQVQLEKQRLLQQNLALVHELQYFNELNSSQTHEIKTKQDETVKEVIIVEKEIPVPPEKKPRLKKRDIVIENKEDALGKLSKKERIQAYAERLAKINGKQ</sequence>
<protein>
    <recommendedName>
        <fullName>Uncharacterized protein MG328 homolog</fullName>
    </recommendedName>
</protein>
<dbReference type="EMBL" id="U00089">
    <property type="protein sequence ID" value="AAB96015.1"/>
    <property type="molecule type" value="Genomic_DNA"/>
</dbReference>
<dbReference type="PIR" id="S73693">
    <property type="entry name" value="S73693"/>
</dbReference>
<dbReference type="RefSeq" id="NP_110162.1">
    <property type="nucleotide sequence ID" value="NC_000912.1"/>
</dbReference>
<dbReference type="RefSeq" id="WP_010874830.1">
    <property type="nucleotide sequence ID" value="NZ_OU342337.1"/>
</dbReference>
<dbReference type="SMR" id="P75310"/>
<dbReference type="IntAct" id="P75310">
    <property type="interactions" value="1"/>
</dbReference>
<dbReference type="STRING" id="272634.MPN_474"/>
<dbReference type="EnsemblBacteria" id="AAB96015">
    <property type="protein sequence ID" value="AAB96015"/>
    <property type="gene ID" value="MPN_474"/>
</dbReference>
<dbReference type="KEGG" id="mpn:MPN_474"/>
<dbReference type="PATRIC" id="fig|272634.6.peg.512"/>
<dbReference type="HOGENOM" id="CLU_293859_0_0_14"/>
<dbReference type="BioCyc" id="MPNE272634:G1GJ3-778-MONOMER"/>
<dbReference type="Proteomes" id="UP000000808">
    <property type="component" value="Chromosome"/>
</dbReference>
<dbReference type="Gene3D" id="1.10.287.1490">
    <property type="match status" value="1"/>
</dbReference>
<gene>
    <name type="ordered locus">MPN_474</name>
    <name type="ORF">MP367</name>
    <name type="ORF">P01_orf1033</name>
</gene>
<feature type="chain" id="PRO_0000210544" description="Uncharacterized protein MG328 homolog">
    <location>
        <begin position="1"/>
        <end position="1033"/>
    </location>
</feature>
<organism>
    <name type="scientific">Mycoplasma pneumoniae (strain ATCC 29342 / M129 / Subtype 1)</name>
    <name type="common">Mycoplasmoides pneumoniae</name>
    <dbReference type="NCBI Taxonomy" id="272634"/>
    <lineage>
        <taxon>Bacteria</taxon>
        <taxon>Bacillati</taxon>
        <taxon>Mycoplasmatota</taxon>
        <taxon>Mycoplasmoidales</taxon>
        <taxon>Mycoplasmoidaceae</taxon>
        <taxon>Mycoplasmoides</taxon>
    </lineage>
</organism>
<proteinExistence type="predicted"/>
<name>Y474_MYCPN</name>
<accession>P75310</accession>